<feature type="chain" id="PRO_1000001628" description="Recombination protein RecR">
    <location>
        <begin position="1"/>
        <end position="198"/>
    </location>
</feature>
<feature type="domain" description="Toprim" evidence="1">
    <location>
        <begin position="80"/>
        <end position="175"/>
    </location>
</feature>
<feature type="zinc finger region" description="C4-type" evidence="1">
    <location>
        <begin position="57"/>
        <end position="72"/>
    </location>
</feature>
<gene>
    <name evidence="1" type="primary">recR</name>
    <name type="ordered locus">MGAS10270_Spy1230</name>
</gene>
<evidence type="ECO:0000255" key="1">
    <source>
        <dbReference type="HAMAP-Rule" id="MF_00017"/>
    </source>
</evidence>
<reference key="1">
    <citation type="journal article" date="2006" name="Proc. Natl. Acad. Sci. U.S.A.">
        <title>Molecular genetic anatomy of inter- and intraserotype variation in the human bacterial pathogen group A Streptococcus.</title>
        <authorList>
            <person name="Beres S.B."/>
            <person name="Richter E.W."/>
            <person name="Nagiec M.J."/>
            <person name="Sumby P."/>
            <person name="Porcella S.F."/>
            <person name="DeLeo F.R."/>
            <person name="Musser J.M."/>
        </authorList>
    </citation>
    <scope>NUCLEOTIDE SEQUENCE [LARGE SCALE GENOMIC DNA]</scope>
    <source>
        <strain>MGAS10270</strain>
    </source>
</reference>
<sequence length="198" mass="21645">MLYPTPIAKLIDSYSKLPGIGIKTATRLAFYTIGMSNEDVNDFAKNLLAAKRELTYCSICGNLTDDDPCHICTDTSRDQTTILVVEDAKDVSAMEKIQEYHGYYHVLHGLISPMNGVGPDDINLKSLITRLMDGKVSEVIVATNATADGEATSMYISRVLKPAGIKVTRLARGLAVGSDIEYADEVTLLRAIENRTEL</sequence>
<name>RECR_STRPD</name>
<accession>Q1JG49</accession>
<keyword id="KW-0227">DNA damage</keyword>
<keyword id="KW-0233">DNA recombination</keyword>
<keyword id="KW-0234">DNA repair</keyword>
<keyword id="KW-0479">Metal-binding</keyword>
<keyword id="KW-0862">Zinc</keyword>
<keyword id="KW-0863">Zinc-finger</keyword>
<proteinExistence type="inferred from homology"/>
<comment type="function">
    <text evidence="1">May play a role in DNA repair. It seems to be involved in an RecBC-independent recombinational process of DNA repair. It may act with RecF and RecO.</text>
</comment>
<comment type="similarity">
    <text evidence="1">Belongs to the RecR family.</text>
</comment>
<organism>
    <name type="scientific">Streptococcus pyogenes serotype M2 (strain MGAS10270)</name>
    <dbReference type="NCBI Taxonomy" id="370552"/>
    <lineage>
        <taxon>Bacteria</taxon>
        <taxon>Bacillati</taxon>
        <taxon>Bacillota</taxon>
        <taxon>Bacilli</taxon>
        <taxon>Lactobacillales</taxon>
        <taxon>Streptococcaceae</taxon>
        <taxon>Streptococcus</taxon>
    </lineage>
</organism>
<protein>
    <recommendedName>
        <fullName evidence="1">Recombination protein RecR</fullName>
    </recommendedName>
</protein>
<dbReference type="EMBL" id="CP000260">
    <property type="protein sequence ID" value="ABF34295.1"/>
    <property type="molecule type" value="Genomic_DNA"/>
</dbReference>
<dbReference type="RefSeq" id="WP_002983939.1">
    <property type="nucleotide sequence ID" value="NZ_CVUH01000008.1"/>
</dbReference>
<dbReference type="SMR" id="Q1JG49"/>
<dbReference type="GeneID" id="69900624"/>
<dbReference type="KEGG" id="sph:MGAS10270_Spy1230"/>
<dbReference type="HOGENOM" id="CLU_060739_1_0_9"/>
<dbReference type="Proteomes" id="UP000002436">
    <property type="component" value="Chromosome"/>
</dbReference>
<dbReference type="GO" id="GO:0003677">
    <property type="term" value="F:DNA binding"/>
    <property type="evidence" value="ECO:0007669"/>
    <property type="project" value="UniProtKB-UniRule"/>
</dbReference>
<dbReference type="GO" id="GO:0008270">
    <property type="term" value="F:zinc ion binding"/>
    <property type="evidence" value="ECO:0007669"/>
    <property type="project" value="UniProtKB-KW"/>
</dbReference>
<dbReference type="GO" id="GO:0006310">
    <property type="term" value="P:DNA recombination"/>
    <property type="evidence" value="ECO:0007669"/>
    <property type="project" value="UniProtKB-UniRule"/>
</dbReference>
<dbReference type="GO" id="GO:0006281">
    <property type="term" value="P:DNA repair"/>
    <property type="evidence" value="ECO:0007669"/>
    <property type="project" value="UniProtKB-UniRule"/>
</dbReference>
<dbReference type="CDD" id="cd01025">
    <property type="entry name" value="TOPRIM_recR"/>
    <property type="match status" value="1"/>
</dbReference>
<dbReference type="Gene3D" id="3.30.60.80">
    <property type="match status" value="1"/>
</dbReference>
<dbReference type="Gene3D" id="3.40.1360.10">
    <property type="match status" value="1"/>
</dbReference>
<dbReference type="Gene3D" id="6.10.250.240">
    <property type="match status" value="1"/>
</dbReference>
<dbReference type="Gene3D" id="1.10.8.420">
    <property type="entry name" value="RecR Domain 1"/>
    <property type="match status" value="1"/>
</dbReference>
<dbReference type="HAMAP" id="MF_00017">
    <property type="entry name" value="RecR"/>
    <property type="match status" value="1"/>
</dbReference>
<dbReference type="InterPro" id="IPR000093">
    <property type="entry name" value="DNA_Rcmb_RecR"/>
</dbReference>
<dbReference type="InterPro" id="IPR023627">
    <property type="entry name" value="Rcmb_RecR"/>
</dbReference>
<dbReference type="InterPro" id="IPR015967">
    <property type="entry name" value="Rcmb_RecR_Znf"/>
</dbReference>
<dbReference type="InterPro" id="IPR006171">
    <property type="entry name" value="TOPRIM_dom"/>
</dbReference>
<dbReference type="InterPro" id="IPR034137">
    <property type="entry name" value="TOPRIM_RecR"/>
</dbReference>
<dbReference type="NCBIfam" id="TIGR00615">
    <property type="entry name" value="recR"/>
    <property type="match status" value="1"/>
</dbReference>
<dbReference type="PANTHER" id="PTHR30446">
    <property type="entry name" value="RECOMBINATION PROTEIN RECR"/>
    <property type="match status" value="1"/>
</dbReference>
<dbReference type="PANTHER" id="PTHR30446:SF0">
    <property type="entry name" value="RECOMBINATION PROTEIN RECR"/>
    <property type="match status" value="1"/>
</dbReference>
<dbReference type="Pfam" id="PF21175">
    <property type="entry name" value="RecR_C"/>
    <property type="match status" value="1"/>
</dbReference>
<dbReference type="Pfam" id="PF21176">
    <property type="entry name" value="RecR_HhH"/>
    <property type="match status" value="1"/>
</dbReference>
<dbReference type="Pfam" id="PF02132">
    <property type="entry name" value="RecR_ZnF"/>
    <property type="match status" value="1"/>
</dbReference>
<dbReference type="Pfam" id="PF13662">
    <property type="entry name" value="Toprim_4"/>
    <property type="match status" value="1"/>
</dbReference>
<dbReference type="SMART" id="SM00493">
    <property type="entry name" value="TOPRIM"/>
    <property type="match status" value="1"/>
</dbReference>
<dbReference type="SUPFAM" id="SSF111304">
    <property type="entry name" value="Recombination protein RecR"/>
    <property type="match status" value="1"/>
</dbReference>
<dbReference type="PROSITE" id="PS01300">
    <property type="entry name" value="RECR"/>
    <property type="match status" value="1"/>
</dbReference>
<dbReference type="PROSITE" id="PS50880">
    <property type="entry name" value="TOPRIM"/>
    <property type="match status" value="1"/>
</dbReference>